<feature type="chain" id="PRO_0000310143" description="Probable nicotinate-nucleotide adenylyltransferase">
    <location>
        <begin position="1"/>
        <end position="212"/>
    </location>
</feature>
<comment type="function">
    <text evidence="1">Catalyzes the reversible adenylation of nicotinate mononucleotide (NaMN) to nicotinic acid adenine dinucleotide (NaAD).</text>
</comment>
<comment type="catalytic activity">
    <reaction evidence="1">
        <text>nicotinate beta-D-ribonucleotide + ATP + H(+) = deamido-NAD(+) + diphosphate</text>
        <dbReference type="Rhea" id="RHEA:22860"/>
        <dbReference type="ChEBI" id="CHEBI:15378"/>
        <dbReference type="ChEBI" id="CHEBI:30616"/>
        <dbReference type="ChEBI" id="CHEBI:33019"/>
        <dbReference type="ChEBI" id="CHEBI:57502"/>
        <dbReference type="ChEBI" id="CHEBI:58437"/>
        <dbReference type="EC" id="2.7.7.18"/>
    </reaction>
</comment>
<comment type="pathway">
    <text evidence="1">Cofactor biosynthesis; NAD(+) biosynthesis; deamido-NAD(+) from nicotinate D-ribonucleotide: step 1/1.</text>
</comment>
<comment type="similarity">
    <text evidence="1">Belongs to the NadD family.</text>
</comment>
<organism>
    <name type="scientific">Shewanella sp. (strain MR-7)</name>
    <dbReference type="NCBI Taxonomy" id="60481"/>
    <lineage>
        <taxon>Bacteria</taxon>
        <taxon>Pseudomonadati</taxon>
        <taxon>Pseudomonadota</taxon>
        <taxon>Gammaproteobacteria</taxon>
        <taxon>Alteromonadales</taxon>
        <taxon>Shewanellaceae</taxon>
        <taxon>Shewanella</taxon>
    </lineage>
</organism>
<evidence type="ECO:0000255" key="1">
    <source>
        <dbReference type="HAMAP-Rule" id="MF_00244"/>
    </source>
</evidence>
<dbReference type="EC" id="2.7.7.18" evidence="1"/>
<dbReference type="EMBL" id="CP000444">
    <property type="protein sequence ID" value="ABI42058.1"/>
    <property type="molecule type" value="Genomic_DNA"/>
</dbReference>
<dbReference type="SMR" id="Q0HXU7"/>
<dbReference type="KEGG" id="shm:Shewmr7_1059"/>
<dbReference type="HOGENOM" id="CLU_069765_0_0_6"/>
<dbReference type="UniPathway" id="UPA00253">
    <property type="reaction ID" value="UER00332"/>
</dbReference>
<dbReference type="GO" id="GO:0005524">
    <property type="term" value="F:ATP binding"/>
    <property type="evidence" value="ECO:0007669"/>
    <property type="project" value="UniProtKB-KW"/>
</dbReference>
<dbReference type="GO" id="GO:0004515">
    <property type="term" value="F:nicotinate-nucleotide adenylyltransferase activity"/>
    <property type="evidence" value="ECO:0007669"/>
    <property type="project" value="UniProtKB-UniRule"/>
</dbReference>
<dbReference type="GO" id="GO:0009435">
    <property type="term" value="P:NAD biosynthetic process"/>
    <property type="evidence" value="ECO:0007669"/>
    <property type="project" value="UniProtKB-UniRule"/>
</dbReference>
<dbReference type="CDD" id="cd02165">
    <property type="entry name" value="NMNAT"/>
    <property type="match status" value="1"/>
</dbReference>
<dbReference type="FunFam" id="3.40.50.620:FF:000039">
    <property type="entry name" value="Probable nicotinate-nucleotide adenylyltransferase"/>
    <property type="match status" value="1"/>
</dbReference>
<dbReference type="Gene3D" id="3.40.50.620">
    <property type="entry name" value="HUPs"/>
    <property type="match status" value="1"/>
</dbReference>
<dbReference type="HAMAP" id="MF_00244">
    <property type="entry name" value="NaMN_adenylyltr"/>
    <property type="match status" value="1"/>
</dbReference>
<dbReference type="InterPro" id="IPR004821">
    <property type="entry name" value="Cyt_trans-like"/>
</dbReference>
<dbReference type="InterPro" id="IPR005248">
    <property type="entry name" value="NadD/NMNAT"/>
</dbReference>
<dbReference type="InterPro" id="IPR014729">
    <property type="entry name" value="Rossmann-like_a/b/a_fold"/>
</dbReference>
<dbReference type="NCBIfam" id="TIGR00125">
    <property type="entry name" value="cyt_tran_rel"/>
    <property type="match status" value="1"/>
</dbReference>
<dbReference type="NCBIfam" id="TIGR00482">
    <property type="entry name" value="nicotinate (nicotinamide) nucleotide adenylyltransferase"/>
    <property type="match status" value="1"/>
</dbReference>
<dbReference type="NCBIfam" id="NF000839">
    <property type="entry name" value="PRK00071.1-1"/>
    <property type="match status" value="1"/>
</dbReference>
<dbReference type="NCBIfam" id="NF000840">
    <property type="entry name" value="PRK00071.1-3"/>
    <property type="match status" value="1"/>
</dbReference>
<dbReference type="PANTHER" id="PTHR39321">
    <property type="entry name" value="NICOTINATE-NUCLEOTIDE ADENYLYLTRANSFERASE-RELATED"/>
    <property type="match status" value="1"/>
</dbReference>
<dbReference type="PANTHER" id="PTHR39321:SF3">
    <property type="entry name" value="PHOSPHOPANTETHEINE ADENYLYLTRANSFERASE"/>
    <property type="match status" value="1"/>
</dbReference>
<dbReference type="Pfam" id="PF01467">
    <property type="entry name" value="CTP_transf_like"/>
    <property type="match status" value="1"/>
</dbReference>
<dbReference type="SUPFAM" id="SSF52374">
    <property type="entry name" value="Nucleotidylyl transferase"/>
    <property type="match status" value="1"/>
</dbReference>
<protein>
    <recommendedName>
        <fullName evidence="1">Probable nicotinate-nucleotide adenylyltransferase</fullName>
        <ecNumber evidence="1">2.7.7.18</ecNumber>
    </recommendedName>
    <alternativeName>
        <fullName evidence="1">Deamido-NAD(+) diphosphorylase</fullName>
    </alternativeName>
    <alternativeName>
        <fullName evidence="1">Deamido-NAD(+) pyrophosphorylase</fullName>
    </alternativeName>
    <alternativeName>
        <fullName evidence="1">Nicotinate mononucleotide adenylyltransferase</fullName>
        <shortName evidence="1">NaMN adenylyltransferase</shortName>
    </alternativeName>
</protein>
<gene>
    <name evidence="1" type="primary">nadD</name>
    <name type="ordered locus">Shewmr7_1059</name>
</gene>
<accession>Q0HXU7</accession>
<proteinExistence type="inferred from homology"/>
<name>NADD_SHESR</name>
<reference key="1">
    <citation type="submission" date="2006-08" db="EMBL/GenBank/DDBJ databases">
        <title>Complete sequence of chromosome 1 of Shewanella sp. MR-7.</title>
        <authorList>
            <person name="Copeland A."/>
            <person name="Lucas S."/>
            <person name="Lapidus A."/>
            <person name="Barry K."/>
            <person name="Detter J.C."/>
            <person name="Glavina del Rio T."/>
            <person name="Hammon N."/>
            <person name="Israni S."/>
            <person name="Dalin E."/>
            <person name="Tice H."/>
            <person name="Pitluck S."/>
            <person name="Kiss H."/>
            <person name="Brettin T."/>
            <person name="Bruce D."/>
            <person name="Han C."/>
            <person name="Tapia R."/>
            <person name="Gilna P."/>
            <person name="Schmutz J."/>
            <person name="Larimer F."/>
            <person name="Land M."/>
            <person name="Hauser L."/>
            <person name="Kyrpides N."/>
            <person name="Mikhailova N."/>
            <person name="Nealson K."/>
            <person name="Konstantinidis K."/>
            <person name="Klappenbach J."/>
            <person name="Tiedje J."/>
            <person name="Richardson P."/>
        </authorList>
    </citation>
    <scope>NUCLEOTIDE SEQUENCE [LARGE SCALE GENOMIC DNA]</scope>
    <source>
        <strain>MR-7</strain>
    </source>
</reference>
<keyword id="KW-0067">ATP-binding</keyword>
<keyword id="KW-0520">NAD</keyword>
<keyword id="KW-0547">Nucleotide-binding</keyword>
<keyword id="KW-0548">Nucleotidyltransferase</keyword>
<keyword id="KW-0662">Pyridine nucleotide biosynthesis</keyword>
<keyword id="KW-0808">Transferase</keyword>
<sequence length="212" mass="24128">MRIGILGGTFDPIHYGHIRPAMEVKASLKLDKILLMPNHIPPHKNTTHSSTAQRLEMVAQVCEALTGFELCDIEAKRDSPSYTVVTLKQLSRLYPDDELFFIMGMDSFIHLQSWHKWQQLFELANIVVCQRPGWHLAEGHPMQHELNVRHATLEALSHSSAPQHGRIFTVDISPQDISSTQIRSLLAMGEIPQDALLPVTLNYIQKQRLYFS</sequence>